<comment type="function">
    <text evidence="1">Catalyzes the four-electron oxidation of UDP-N-acetyl-D-mannosamine (UDP-ManNAc), reducing NAD(+) and releasing UDP-N-acetylmannosaminuronic acid (UDP-ManNAcA).</text>
</comment>
<comment type="catalytic activity">
    <reaction evidence="1">
        <text>UDP-N-acetyl-alpha-D-mannosamine + 2 NAD(+) + H2O = UDP-N-acetyl-alpha-D-mannosaminouronate + 2 NADH + 3 H(+)</text>
        <dbReference type="Rhea" id="RHEA:25780"/>
        <dbReference type="ChEBI" id="CHEBI:15377"/>
        <dbReference type="ChEBI" id="CHEBI:15378"/>
        <dbReference type="ChEBI" id="CHEBI:57540"/>
        <dbReference type="ChEBI" id="CHEBI:57945"/>
        <dbReference type="ChEBI" id="CHEBI:68623"/>
        <dbReference type="ChEBI" id="CHEBI:70731"/>
        <dbReference type="EC" id="1.1.1.336"/>
    </reaction>
</comment>
<comment type="pathway">
    <text evidence="1">Bacterial outer membrane biogenesis; enterobacterial common antigen biosynthesis.</text>
</comment>
<comment type="subunit">
    <text evidence="1">Homodimer.</text>
</comment>
<comment type="similarity">
    <text evidence="1">Belongs to the UDP-glucose/GDP-mannose dehydrogenase family. WecC subfamily.</text>
</comment>
<evidence type="ECO:0000255" key="1">
    <source>
        <dbReference type="HAMAP-Rule" id="MF_02029"/>
    </source>
</evidence>
<sequence>MSFTTISVIGLGYIGLPTAAAFASRQKQVIGVDINQHAVDIINRGEIHIVEPALGNVVKMAVEGGFLRATTTPVEADAYLIAVPTPFKGDHDPDMAYVEAAAKSIAPVLKKGALVILESTSPVGATEQMAGWLAGMRTDLTFPQQAGEQADVNIAYCPERVLPGQVMVELIKNDRVIGGMTPVCSARASALYKIFLEGECVVTNSRTAEMCKLTENSFRDVNIAFANELSLICAEQGINVWELIRLANRHPRVNILQPGPGVGGHCIAVDPWFIVAQNPQQARLIRTAREVNDGKPHWVVDQVKAAVTDCLAATDKRASEVKIACFGLAFKPNIDDLRESPAMGIAQSIARWHSGETLVVEPNIRQLPKKLDGLCTLAKLDAALAAADVLVMLVDHDEFKAIPGDAVHQRYVVDTKGVWR</sequence>
<keyword id="KW-0520">NAD</keyword>
<keyword id="KW-0560">Oxidoreductase</keyword>
<keyword id="KW-1185">Reference proteome</keyword>
<accession>Q9L6R4</accession>
<protein>
    <recommendedName>
        <fullName evidence="1">UDP-N-acetyl-D-mannosamine dehydrogenase</fullName>
        <ecNumber evidence="1">1.1.1.336</ecNumber>
    </recommendedName>
    <alternativeName>
        <fullName evidence="1">UDP-ManNAc 6-dehydrogenase</fullName>
    </alternativeName>
</protein>
<feature type="chain" id="PRO_0000074080" description="UDP-N-acetyl-D-mannosamine dehydrogenase">
    <location>
        <begin position="1"/>
        <end position="420"/>
    </location>
</feature>
<feature type="active site" description="Proton donor/acceptor" evidence="1">
    <location>
        <position position="212"/>
    </location>
</feature>
<feature type="active site" description="Nucleophile" evidence="1">
    <location>
        <position position="266"/>
    </location>
</feature>
<feature type="binding site" description="in chain A" evidence="1">
    <location>
        <position position="13"/>
    </location>
    <ligand>
        <name>NAD(+)</name>
        <dbReference type="ChEBI" id="CHEBI:57540"/>
        <note>ligand shared between homodimeric partners</note>
    </ligand>
</feature>
<feature type="binding site" description="in chain A" evidence="1">
    <location>
        <position position="14"/>
    </location>
    <ligand>
        <name>NAD(+)</name>
        <dbReference type="ChEBI" id="CHEBI:57540"/>
        <note>ligand shared between homodimeric partners</note>
    </ligand>
</feature>
<feature type="binding site" description="in chain A" evidence="1">
    <location>
        <position position="33"/>
    </location>
    <ligand>
        <name>NAD(+)</name>
        <dbReference type="ChEBI" id="CHEBI:57540"/>
        <note>ligand shared between homodimeric partners</note>
    </ligand>
</feature>
<feature type="binding site" description="in chain A" evidence="1">
    <location>
        <position position="85"/>
    </location>
    <ligand>
        <name>NAD(+)</name>
        <dbReference type="ChEBI" id="CHEBI:57540"/>
        <note>ligand shared between homodimeric partners</note>
    </ligand>
</feature>
<feature type="binding site" description="in chain A" evidence="1">
    <location>
        <position position="126"/>
    </location>
    <ligand>
        <name>NAD(+)</name>
        <dbReference type="ChEBI" id="CHEBI:57540"/>
        <note>ligand shared between homodimeric partners</note>
    </ligand>
</feature>
<feature type="binding site" description="in chain A" evidence="1">
    <location>
        <position position="160"/>
    </location>
    <ligand>
        <name>UDP-N-acetyl-alpha-D-mannosaminouronate</name>
        <dbReference type="ChEBI" id="CHEBI:70731"/>
        <note>ligand shared between homodimeric partners</note>
    </ligand>
</feature>
<feature type="binding site" description="in chain A" evidence="1">
    <location>
        <position position="161"/>
    </location>
    <ligand>
        <name>UDP-N-acetyl-alpha-D-mannosaminouronate</name>
        <dbReference type="ChEBI" id="CHEBI:70731"/>
        <note>ligand shared between homodimeric partners</note>
    </ligand>
</feature>
<feature type="binding site" description="in chain A" evidence="1">
    <location>
        <position position="212"/>
    </location>
    <ligand>
        <name>UDP-N-acetyl-alpha-D-mannosaminouronate</name>
        <dbReference type="ChEBI" id="CHEBI:70731"/>
        <note>ligand shared between homodimeric partners</note>
    </ligand>
</feature>
<feature type="binding site" description="in chain A" evidence="1">
    <location>
        <position position="216"/>
    </location>
    <ligand>
        <name>UDP-N-acetyl-alpha-D-mannosaminouronate</name>
        <dbReference type="ChEBI" id="CHEBI:70731"/>
        <note>ligand shared between homodimeric partners</note>
    </ligand>
</feature>
<feature type="binding site" description="in chain A" evidence="1">
    <location>
        <position position="219"/>
    </location>
    <ligand>
        <name>UDP-N-acetyl-alpha-D-mannosaminouronate</name>
        <dbReference type="ChEBI" id="CHEBI:70731"/>
        <note>ligand shared between homodimeric partners</note>
    </ligand>
</feature>
<feature type="binding site" description="in chain B" evidence="1">
    <location>
        <position position="250"/>
    </location>
    <ligand>
        <name>UDP-N-acetyl-alpha-D-mannosaminouronate</name>
        <dbReference type="ChEBI" id="CHEBI:70731"/>
        <note>ligand shared between homodimeric partners</note>
    </ligand>
</feature>
<feature type="binding site" description="in chain B" evidence="1">
    <location>
        <position position="252"/>
    </location>
    <ligand>
        <name>UDP-N-acetyl-alpha-D-mannosaminouronate</name>
        <dbReference type="ChEBI" id="CHEBI:70731"/>
        <note>ligand shared between homodimeric partners</note>
    </ligand>
</feature>
<feature type="binding site" description="in chain A" evidence="1">
    <location>
        <position position="263"/>
    </location>
    <ligand>
        <name>UDP-N-acetyl-alpha-D-mannosaminouronate</name>
        <dbReference type="ChEBI" id="CHEBI:70731"/>
        <note>ligand shared between homodimeric partners</note>
    </ligand>
</feature>
<feature type="binding site" description="in chain A" evidence="1">
    <location>
        <position position="330"/>
    </location>
    <ligand>
        <name>UDP-N-acetyl-alpha-D-mannosaminouronate</name>
        <dbReference type="ChEBI" id="CHEBI:70731"/>
        <note>ligand shared between homodimeric partners</note>
    </ligand>
</feature>
<feature type="binding site" description="in chain A" evidence="1">
    <location>
        <position position="331"/>
    </location>
    <ligand>
        <name>UDP-N-acetyl-alpha-D-mannosaminouronate</name>
        <dbReference type="ChEBI" id="CHEBI:70731"/>
        <note>ligand shared between homodimeric partners</note>
    </ligand>
</feature>
<feature type="binding site" description="in chain B" evidence="1">
    <location>
        <position position="338"/>
    </location>
    <ligand>
        <name>NAD(+)</name>
        <dbReference type="ChEBI" id="CHEBI:57540"/>
        <note>ligand shared between homodimeric partners</note>
    </ligand>
</feature>
<feature type="binding site" description="in chain A" evidence="1">
    <location>
        <position position="416"/>
    </location>
    <ligand>
        <name>UDP-N-acetyl-alpha-D-mannosaminouronate</name>
        <dbReference type="ChEBI" id="CHEBI:70731"/>
        <note>ligand shared between homodimeric partners</note>
    </ligand>
</feature>
<gene>
    <name evidence="1" type="primary">wecC</name>
    <name type="synonym">rffD</name>
    <name type="ordered locus">STM3921</name>
    <name type="ORF">STMD1.69</name>
</gene>
<proteinExistence type="inferred from homology"/>
<organism>
    <name type="scientific">Salmonella typhimurium (strain LT2 / SGSC1412 / ATCC 700720)</name>
    <dbReference type="NCBI Taxonomy" id="99287"/>
    <lineage>
        <taxon>Bacteria</taxon>
        <taxon>Pseudomonadati</taxon>
        <taxon>Pseudomonadota</taxon>
        <taxon>Gammaproteobacteria</taxon>
        <taxon>Enterobacterales</taxon>
        <taxon>Enterobacteriaceae</taxon>
        <taxon>Salmonella</taxon>
    </lineage>
</organism>
<reference key="1">
    <citation type="journal article" date="2001" name="Nature">
        <title>Complete genome sequence of Salmonella enterica serovar Typhimurium LT2.</title>
        <authorList>
            <person name="McClelland M."/>
            <person name="Sanderson K.E."/>
            <person name="Spieth J."/>
            <person name="Clifton S.W."/>
            <person name="Latreille P."/>
            <person name="Courtney L."/>
            <person name="Porwollik S."/>
            <person name="Ali J."/>
            <person name="Dante M."/>
            <person name="Du F."/>
            <person name="Hou S."/>
            <person name="Layman D."/>
            <person name="Leonard S."/>
            <person name="Nguyen C."/>
            <person name="Scott K."/>
            <person name="Holmes A."/>
            <person name="Grewal N."/>
            <person name="Mulvaney E."/>
            <person name="Ryan E."/>
            <person name="Sun H."/>
            <person name="Florea L."/>
            <person name="Miller W."/>
            <person name="Stoneking T."/>
            <person name="Nhan M."/>
            <person name="Waterston R."/>
            <person name="Wilson R.K."/>
        </authorList>
    </citation>
    <scope>NUCLEOTIDE SEQUENCE [LARGE SCALE GENOMIC DNA]</scope>
    <source>
        <strain>LT2 / SGSC1412 / ATCC 700720</strain>
    </source>
</reference>
<dbReference type="EC" id="1.1.1.336" evidence="1"/>
<dbReference type="EMBL" id="AE006468">
    <property type="protein sequence ID" value="AAL22770.1"/>
    <property type="molecule type" value="Genomic_DNA"/>
</dbReference>
<dbReference type="EMBL" id="AF233324">
    <property type="protein sequence ID" value="AAF33466.1"/>
    <property type="molecule type" value="Genomic_DNA"/>
</dbReference>
<dbReference type="RefSeq" id="NP_462811.1">
    <property type="nucleotide sequence ID" value="NC_003197.2"/>
</dbReference>
<dbReference type="RefSeq" id="WP_000011227.1">
    <property type="nucleotide sequence ID" value="NC_003197.2"/>
</dbReference>
<dbReference type="SMR" id="Q9L6R4"/>
<dbReference type="STRING" id="99287.STM3921"/>
<dbReference type="PaxDb" id="99287-STM3921"/>
<dbReference type="GeneID" id="1255447"/>
<dbReference type="KEGG" id="stm:STM3921"/>
<dbReference type="PATRIC" id="fig|99287.12.peg.4142"/>
<dbReference type="HOGENOM" id="CLU_023810_3_2_6"/>
<dbReference type="OMA" id="IDPWFIV"/>
<dbReference type="PhylomeDB" id="Q9L6R4"/>
<dbReference type="BioCyc" id="SENT99287:STM3921-MONOMER"/>
<dbReference type="UniPathway" id="UPA00566"/>
<dbReference type="Proteomes" id="UP000001014">
    <property type="component" value="Chromosome"/>
</dbReference>
<dbReference type="GO" id="GO:0051287">
    <property type="term" value="F:NAD binding"/>
    <property type="evidence" value="ECO:0007669"/>
    <property type="project" value="InterPro"/>
</dbReference>
<dbReference type="GO" id="GO:0016628">
    <property type="term" value="F:oxidoreductase activity, acting on the CH-CH group of donors, NAD or NADP as acceptor"/>
    <property type="evidence" value="ECO:0007669"/>
    <property type="project" value="InterPro"/>
</dbReference>
<dbReference type="GO" id="GO:0089714">
    <property type="term" value="F:UDP-N-acetyl-D-mannosamine dehydrogenase activity"/>
    <property type="evidence" value="ECO:0007669"/>
    <property type="project" value="UniProtKB-UniRule"/>
</dbReference>
<dbReference type="GO" id="GO:0009246">
    <property type="term" value="P:enterobacterial common antigen biosynthetic process"/>
    <property type="evidence" value="ECO:0007669"/>
    <property type="project" value="UniProtKB-UniRule"/>
</dbReference>
<dbReference type="FunFam" id="3.40.50.720:FF:000139">
    <property type="entry name" value="UDP-N-acetyl-D-mannosamine dehydrogenase"/>
    <property type="match status" value="1"/>
</dbReference>
<dbReference type="FunFam" id="3.40.50.720:FF:000235">
    <property type="entry name" value="UDP-N-acetyl-D-mannosamine dehydrogenase"/>
    <property type="match status" value="1"/>
</dbReference>
<dbReference type="Gene3D" id="1.20.5.100">
    <property type="entry name" value="Cytochrome c1, transmembrane anchor, C-terminal"/>
    <property type="match status" value="1"/>
</dbReference>
<dbReference type="Gene3D" id="3.40.50.720">
    <property type="entry name" value="NAD(P)-binding Rossmann-like Domain"/>
    <property type="match status" value="2"/>
</dbReference>
<dbReference type="HAMAP" id="MF_02029">
    <property type="entry name" value="WecC_RffD"/>
    <property type="match status" value="1"/>
</dbReference>
<dbReference type="InterPro" id="IPR008927">
    <property type="entry name" value="6-PGluconate_DH-like_C_sf"/>
</dbReference>
<dbReference type="InterPro" id="IPR036291">
    <property type="entry name" value="NAD(P)-bd_dom_sf"/>
</dbReference>
<dbReference type="InterPro" id="IPR017476">
    <property type="entry name" value="UDP-Glc/GDP-Man"/>
</dbReference>
<dbReference type="InterPro" id="IPR014027">
    <property type="entry name" value="UDP-Glc/GDP-Man_DH_C"/>
</dbReference>
<dbReference type="InterPro" id="IPR036220">
    <property type="entry name" value="UDP-Glc/GDP-Man_DH_C_sf"/>
</dbReference>
<dbReference type="InterPro" id="IPR014026">
    <property type="entry name" value="UDP-Glc/GDP-Man_DH_dimer"/>
</dbReference>
<dbReference type="InterPro" id="IPR001732">
    <property type="entry name" value="UDP-Glc/GDP-Man_DH_N"/>
</dbReference>
<dbReference type="InterPro" id="IPR028359">
    <property type="entry name" value="UDP_ManNAc/GlcNAc_DH"/>
</dbReference>
<dbReference type="InterPro" id="IPR032891">
    <property type="entry name" value="WecC"/>
</dbReference>
<dbReference type="NCBIfam" id="TIGR03026">
    <property type="entry name" value="NDP-sugDHase"/>
    <property type="match status" value="1"/>
</dbReference>
<dbReference type="NCBIfam" id="NF008286">
    <property type="entry name" value="PRK11064.1"/>
    <property type="match status" value="1"/>
</dbReference>
<dbReference type="PANTHER" id="PTHR43491">
    <property type="entry name" value="UDP-N-ACETYL-D-MANNOSAMINE DEHYDROGENASE"/>
    <property type="match status" value="1"/>
</dbReference>
<dbReference type="PANTHER" id="PTHR43491:SF1">
    <property type="entry name" value="UDP-N-ACETYL-D-MANNOSAMINE DEHYDROGENASE"/>
    <property type="match status" value="1"/>
</dbReference>
<dbReference type="Pfam" id="PF00984">
    <property type="entry name" value="UDPG_MGDP_dh"/>
    <property type="match status" value="1"/>
</dbReference>
<dbReference type="Pfam" id="PF03720">
    <property type="entry name" value="UDPG_MGDP_dh_C"/>
    <property type="match status" value="1"/>
</dbReference>
<dbReference type="Pfam" id="PF03721">
    <property type="entry name" value="UDPG_MGDP_dh_N"/>
    <property type="match status" value="1"/>
</dbReference>
<dbReference type="PIRSF" id="PIRSF500136">
    <property type="entry name" value="UDP_ManNAc_DH"/>
    <property type="match status" value="1"/>
</dbReference>
<dbReference type="PIRSF" id="PIRSF000124">
    <property type="entry name" value="UDPglc_GDPman_dh"/>
    <property type="match status" value="1"/>
</dbReference>
<dbReference type="SMART" id="SM00984">
    <property type="entry name" value="UDPG_MGDP_dh_C"/>
    <property type="match status" value="1"/>
</dbReference>
<dbReference type="SUPFAM" id="SSF48179">
    <property type="entry name" value="6-phosphogluconate dehydrogenase C-terminal domain-like"/>
    <property type="match status" value="1"/>
</dbReference>
<dbReference type="SUPFAM" id="SSF51735">
    <property type="entry name" value="NAD(P)-binding Rossmann-fold domains"/>
    <property type="match status" value="1"/>
</dbReference>
<dbReference type="SUPFAM" id="SSF52413">
    <property type="entry name" value="UDP-glucose/GDP-mannose dehydrogenase C-terminal domain"/>
    <property type="match status" value="1"/>
</dbReference>
<name>WECC_SALTY</name>